<accession>O24463</accession>
<gene>
    <name type="primary">PBF</name>
</gene>
<organism>
    <name type="scientific">Zea mays</name>
    <name type="common">Maize</name>
    <dbReference type="NCBI Taxonomy" id="4577"/>
    <lineage>
        <taxon>Eukaryota</taxon>
        <taxon>Viridiplantae</taxon>
        <taxon>Streptophyta</taxon>
        <taxon>Embryophyta</taxon>
        <taxon>Tracheophyta</taxon>
        <taxon>Spermatophyta</taxon>
        <taxon>Magnoliopsida</taxon>
        <taxon>Liliopsida</taxon>
        <taxon>Poales</taxon>
        <taxon>Poaceae</taxon>
        <taxon>PACMAD clade</taxon>
        <taxon>Panicoideae</taxon>
        <taxon>Andropogonodae</taxon>
        <taxon>Andropogoneae</taxon>
        <taxon>Tripsacinae</taxon>
        <taxon>Zea</taxon>
    </lineage>
</organism>
<proteinExistence type="evidence at protein level"/>
<reference key="1">
    <citation type="journal article" date="1997" name="Proc. Natl. Acad. Sci. U.S.A.">
        <title>A maize zinc-finger protein binds the prolamin box in zein gene promoters and interacts with the basic leucine zipper transcriptional activator Opaque-2.</title>
        <authorList>
            <person name="Vicente-Carbajosa J."/>
            <person name="Moose S.P."/>
            <person name="Parsons R.L."/>
            <person name="Schmidt R.J."/>
        </authorList>
    </citation>
    <scope>NUCLEOTIDE SEQUENCE [MRNA]</scope>
    <scope>TISSUE SPECIFICITY</scope>
    <scope>INTERACTION WITH O2</scope>
    <source>
        <tissue>Seed endosperm</tissue>
    </source>
</reference>
<feature type="chain" id="PRO_0000074300" description="Dof zinc finger protein PBF">
    <location>
        <begin position="1"/>
        <end position="328"/>
    </location>
</feature>
<feature type="zinc finger region" description="Dof-type" evidence="1">
    <location>
        <begin position="60"/>
        <end position="114"/>
    </location>
</feature>
<feature type="region of interest" description="Disordered" evidence="2">
    <location>
        <begin position="33"/>
        <end position="56"/>
    </location>
</feature>
<feature type="region of interest" description="Disordered" evidence="2">
    <location>
        <begin position="124"/>
        <end position="144"/>
    </location>
</feature>
<feature type="region of interest" description="Disordered" evidence="2">
    <location>
        <begin position="306"/>
        <end position="328"/>
    </location>
</feature>
<feature type="binding site" evidence="1">
    <location>
        <position position="62"/>
    </location>
    <ligand>
        <name>Zn(2+)</name>
        <dbReference type="ChEBI" id="CHEBI:29105"/>
    </ligand>
</feature>
<feature type="binding site" evidence="1">
    <location>
        <position position="65"/>
    </location>
    <ligand>
        <name>Zn(2+)</name>
        <dbReference type="ChEBI" id="CHEBI:29105"/>
    </ligand>
</feature>
<feature type="binding site" evidence="1">
    <location>
        <position position="87"/>
    </location>
    <ligand>
        <name>Zn(2+)</name>
        <dbReference type="ChEBI" id="CHEBI:29105"/>
    </ligand>
</feature>
<feature type="binding site" evidence="1">
    <location>
        <position position="90"/>
    </location>
    <ligand>
        <name>Zn(2+)</name>
        <dbReference type="ChEBI" id="CHEBI:29105"/>
    </ligand>
</feature>
<comment type="function">
    <text>Transcription factor that binds specifically to a 5'-AA[AG]G-3' consensus core sequence. May enhance the DNA binding of the bZIP transcription factor Opaque-2 to O2 binding site elements.</text>
</comment>
<comment type="subunit">
    <text evidence="3">Interacts with the bZIP transcription factor Opaque-2/O2.</text>
</comment>
<comment type="subcellular location">
    <subcellularLocation>
        <location>Nucleus</location>
    </subcellularLocation>
</comment>
<comment type="tissue specificity">
    <text evidence="3">Seed endosperm.</text>
</comment>
<sequence length="328" mass="35398">MDMISGSTAATSTPHNNQQAVMLSSPIIKEEARDPKQTRAMPQIGGSGERKPRPQLPEALKCPRCDSNNTKFCYYNNYSMSQPRYFCKACRRYWTHGGTLRNVPIGGGCRKNKHASRFVLGSHTSSSSSATYAPLSPSTNASSSNMSINKHMMMVPNMTMPTPTTMGLFPNVLPTLMPTGGGGGFDFTMDNQHRSLSFTPMSLPSQGPVPMLAAGGSEATPSFLEMLRGGIFHGSSSYNTSLTMSGGNNGMDKPFSLPSYGAMCTNGLSGSTTNDARQLVGPQQDNKAIMKSSNNNNGVSLLNLYWNKHNNNNNNNNNNNNNNNNKGQ</sequence>
<evidence type="ECO:0000255" key="1">
    <source>
        <dbReference type="PROSITE-ProRule" id="PRU00071"/>
    </source>
</evidence>
<evidence type="ECO:0000256" key="2">
    <source>
        <dbReference type="SAM" id="MobiDB-lite"/>
    </source>
</evidence>
<evidence type="ECO:0000269" key="3">
    <source>
    </source>
</evidence>
<keyword id="KW-0238">DNA-binding</keyword>
<keyword id="KW-0479">Metal-binding</keyword>
<keyword id="KW-0539">Nucleus</keyword>
<keyword id="KW-1185">Reference proteome</keyword>
<keyword id="KW-0804">Transcription</keyword>
<keyword id="KW-0805">Transcription regulation</keyword>
<keyword id="KW-0862">Zinc</keyword>
<keyword id="KW-0863">Zinc-finger</keyword>
<dbReference type="EMBL" id="U82230">
    <property type="protein sequence ID" value="AAB70119.1"/>
    <property type="molecule type" value="mRNA"/>
</dbReference>
<dbReference type="PIR" id="T02046">
    <property type="entry name" value="T02046"/>
</dbReference>
<dbReference type="STRING" id="4577.O24463"/>
<dbReference type="PaxDb" id="4577-GRMZM2G146283_P01"/>
<dbReference type="eggNOG" id="ENOG502RB9Y">
    <property type="taxonomic scope" value="Eukaryota"/>
</dbReference>
<dbReference type="InParanoid" id="O24463"/>
<dbReference type="Proteomes" id="UP000007305">
    <property type="component" value="Unplaced"/>
</dbReference>
<dbReference type="ExpressionAtlas" id="O24463">
    <property type="expression patterns" value="baseline and differential"/>
</dbReference>
<dbReference type="GO" id="GO:0005634">
    <property type="term" value="C:nucleus"/>
    <property type="evidence" value="ECO:0007669"/>
    <property type="project" value="UniProtKB-SubCell"/>
</dbReference>
<dbReference type="GO" id="GO:0003677">
    <property type="term" value="F:DNA binding"/>
    <property type="evidence" value="ECO:0007669"/>
    <property type="project" value="UniProtKB-KW"/>
</dbReference>
<dbReference type="GO" id="GO:0003700">
    <property type="term" value="F:DNA-binding transcription factor activity"/>
    <property type="evidence" value="ECO:0007669"/>
    <property type="project" value="InterPro"/>
</dbReference>
<dbReference type="GO" id="GO:0008270">
    <property type="term" value="F:zinc ion binding"/>
    <property type="evidence" value="ECO:0007669"/>
    <property type="project" value="UniProtKB-KW"/>
</dbReference>
<dbReference type="InterPro" id="IPR045174">
    <property type="entry name" value="Dof"/>
</dbReference>
<dbReference type="InterPro" id="IPR003851">
    <property type="entry name" value="Znf_Dof"/>
</dbReference>
<dbReference type="PANTHER" id="PTHR31992">
    <property type="entry name" value="DOF ZINC FINGER PROTEIN DOF1.4-RELATED"/>
    <property type="match status" value="1"/>
</dbReference>
<dbReference type="PANTHER" id="PTHR31992:SF313">
    <property type="entry name" value="DOF ZINC FINGER PROTEIN DOF5.7"/>
    <property type="match status" value="1"/>
</dbReference>
<dbReference type="Pfam" id="PF02701">
    <property type="entry name" value="Zn_ribbon_Dof"/>
    <property type="match status" value="1"/>
</dbReference>
<dbReference type="PROSITE" id="PS01361">
    <property type="entry name" value="ZF_DOF_1"/>
    <property type="match status" value="1"/>
</dbReference>
<dbReference type="PROSITE" id="PS50884">
    <property type="entry name" value="ZF_DOF_2"/>
    <property type="match status" value="1"/>
</dbReference>
<name>PBF_MAIZE</name>
<protein>
    <recommendedName>
        <fullName>Dof zinc finger protein PBF</fullName>
    </recommendedName>
    <alternativeName>
        <fullName>Prolamin box-binding factor</fullName>
    </alternativeName>
</protein>